<proteinExistence type="evidence at protein level"/>
<feature type="chain" id="PRO_0000419431" description="Protein PA-X">
    <location>
        <begin position="1"/>
        <end position="252"/>
    </location>
</feature>
<feature type="active site" evidence="2">
    <location>
        <position position="80"/>
    </location>
</feature>
<feature type="active site" evidence="2">
    <location>
        <position position="108"/>
    </location>
</feature>
<feature type="site" description="Important for efficient shutoff activity" evidence="6">
    <location>
        <position position="28"/>
    </location>
</feature>
<feature type="site" description="Important for efficient shutoff activity" evidence="6">
    <location>
        <position position="65"/>
    </location>
</feature>
<feature type="site" description="Important for efficient shutoff activity and nuclear localization" evidence="8">
    <location>
        <position position="195"/>
    </location>
</feature>
<feature type="site" description="Important for efficient shutoff activity and nuclear localization" evidence="8">
    <location>
        <position position="198"/>
    </location>
</feature>
<feature type="site" description="Important for efficient shutoff activity and nuclear localization" evidence="8">
    <location>
        <position position="199"/>
    </location>
</feature>
<feature type="site" description="Important for efficient shutoff activity" evidence="4">
    <location>
        <position position="202"/>
    </location>
</feature>
<feature type="site" description="Important for efficient shutoff activity" evidence="4">
    <location>
        <position position="203"/>
    </location>
</feature>
<feature type="site" description="Important for efficient shutoff activity" evidence="4">
    <location>
        <position position="206"/>
    </location>
</feature>
<feature type="modified residue" description="N-acetylmethionine; by host" evidence="5">
    <location>
        <position position="1"/>
    </location>
</feature>
<feature type="mutagenesis site" description="Lower shutoff activity than WT." evidence="5">
    <original>E</original>
    <variation>A</variation>
    <variation>P</variation>
    <location>
        <position position="2"/>
    </location>
</feature>
<feature type="mutagenesis site" description="Slightly reduced shutoff activity." evidence="5">
    <original>E</original>
    <variation>D</variation>
    <variation>N</variation>
    <location>
        <position position="2"/>
    </location>
</feature>
<feature type="mutagenesis site" description="Drastic loss of shutoff activity." evidence="6">
    <original>L</original>
    <variation>P</variation>
    <location>
        <position position="28"/>
    </location>
</feature>
<feature type="mutagenesis site" description="Drastic loss of shutoff activity." evidence="6">
    <original>L</original>
    <variation>S</variation>
    <location>
        <position position="65"/>
    </location>
</feature>
<sequence>MEDFVRQCFNPMIVELAEKAMKEYGEDLKIETNKFAAICTHLEVCFMYSDFHFIDEQGESIVVELGDPNALLKHRFEIIEGRDRTIAWTVINSICNTTGAEKPKFLPDLYDYKKNRFIEIGVTRREVHIYYLEKANKIKSEKTHIHIFSFTGEEMATKADYTLDEESRARIKTRLFTIRQEMASRGLWDSFVSPREAKRQLKKDLKSQEQCASLPTKVSRQTSPALKILEPMWMDSNRTATLRASFLKCPKK</sequence>
<comment type="function">
    <text evidence="1 3 4 6">Plays a major role in the shutoff of the host protein expression by cleaving mRNAs probably via an endonuclease activity (PubMed:30894843). Also reduces viral mRNA accumulation (PubMed:26041295). This host shutoff allows the virus to escape from the host antiviral response (By similarity). Hijacks host RNA splicing machinery to selectively target host RNAs containing introns for destruction (By similarity). This may explain the preferential degradation of RNAs that have undergone co- or post-transcriptional processing (By similarity).</text>
</comment>
<comment type="subcellular location">
    <subcellularLocation>
        <location evidence="3">Host cytoplasm</location>
    </subcellularLocation>
    <subcellularLocation>
        <location evidence="3">Host nucleus</location>
    </subcellularLocation>
</comment>
<comment type="alternative products">
    <event type="ribosomal frameshifting"/>
    <isoform>
        <id>P0DJW8-1</id>
        <name>PA-X</name>
        <sequence type="displayed"/>
    </isoform>
    <isoform>
        <id>P15659-1</id>
        <name>PA</name>
        <sequence type="external"/>
    </isoform>
</comment>
<comment type="domain">
    <text evidence="1 3 4">The probable endonuclease active site in the N-terminus and the basic amino acid cluster in the C-terminus are important for the shutoff activity (PubMed:26041295). The C-terminus acts as a nuclear localization signal (By similarity). The C-terminus is recruited to host protein complexes involved in nuclear Pol II RNA processing (By similarity).</text>
</comment>
<comment type="PTM">
    <text evidence="5">Acetylation of the N-terminus by host NATB is important for the shutoff activity.</text>
</comment>
<comment type="similarity">
    <text evidence="7">Belongs to the influenza viruses PA-X family.</text>
</comment>
<reference key="1">
    <citation type="journal article" date="1990" name="Nucleic Acids Res.">
        <title>Nucleotide sequence of the PA gene of influenza A/WSN/33(H1N1).</title>
        <authorList>
            <person name="Odagiri T."/>
            <person name="Tobita K."/>
        </authorList>
    </citation>
    <scope>NUCLEOTIDE SEQUENCE [GENOMIC RNA]</scope>
</reference>
<reference key="2">
    <citation type="journal article" date="2015" name="J. Virol.">
        <title>Mapping of a Region of the PA-X Protein of Influenza A Virus That Is Important for Its Shutoff Activity.</title>
        <authorList>
            <person name="Oishi K."/>
            <person name="Yamayoshi S."/>
            <person name="Kawaoka Y."/>
        </authorList>
    </citation>
    <scope>FUNCTION</scope>
    <scope>DOMAIN</scope>
    <source>
        <strain>A/Wyoming/03/2003</strain>
    </source>
</reference>
<reference key="3">
    <citation type="journal article" date="2018" name="Cell Rep.">
        <title>N-Terminal Acetylation by NatB Is Required for the Shutoff Activity of Influenza A Virus PA-X.</title>
        <authorList>
            <person name="Oishi K."/>
            <person name="Yamayoshi S."/>
            <person name="Kozuka-Hata H."/>
            <person name="Oyama M."/>
            <person name="Kawaoka Y."/>
        </authorList>
    </citation>
    <scope>ACETYLATION AT MET-1</scope>
    <scope>MUTAGENESIS OF GLU-2</scope>
</reference>
<reference key="4">
    <citation type="journal article" date="2019" name="Front. Microbiol.">
        <title>Identification of Amino Acid Residues in Influenza A Virus PA-X That Contribute to Enhanced Shutoff Activity.</title>
        <authorList>
            <person name="Oishi K."/>
            <person name="Yamayoshi S."/>
            <person name="Kawaoka Y."/>
        </authorList>
    </citation>
    <scope>FUNCTION</scope>
    <scope>MUTAGENESIS OF LEU-28 AND LEU-65</scope>
</reference>
<organismHost>
    <name type="scientific">Aves</name>
    <dbReference type="NCBI Taxonomy" id="8782"/>
</organismHost>
<organismHost>
    <name type="scientific">Homo sapiens</name>
    <name type="common">Human</name>
    <dbReference type="NCBI Taxonomy" id="9606"/>
</organismHost>
<organismHost>
    <name type="scientific">Sus scrofa</name>
    <name type="common">Pig</name>
    <dbReference type="NCBI Taxonomy" id="9823"/>
</organismHost>
<name>PAX_I33A0</name>
<organism>
    <name type="scientific">Influenza A virus (strain A/Wilson-Smith/1933 H1N1)</name>
    <name type="common">Influenza A virus (strain A/WS/1933 H1N1)</name>
    <dbReference type="NCBI Taxonomy" id="381518"/>
    <lineage>
        <taxon>Viruses</taxon>
        <taxon>Riboviria</taxon>
        <taxon>Orthornavirae</taxon>
        <taxon>Negarnaviricota</taxon>
        <taxon>Polyploviricotina</taxon>
        <taxon>Insthoviricetes</taxon>
        <taxon>Articulavirales</taxon>
        <taxon>Orthomyxoviridae</taxon>
        <taxon>Alphainfluenzavirus</taxon>
        <taxon>Alphainfluenzavirus influenzae</taxon>
        <taxon>Influenza A virus</taxon>
    </lineage>
</organism>
<evidence type="ECO:0000250" key="1">
    <source>
        <dbReference type="UniProtKB" id="P0CK64"/>
    </source>
</evidence>
<evidence type="ECO:0000250" key="2">
    <source>
        <dbReference type="UniProtKB" id="P0CK68"/>
    </source>
</evidence>
<evidence type="ECO:0000250" key="3">
    <source>
        <dbReference type="UniProtKB" id="P0DXO5"/>
    </source>
</evidence>
<evidence type="ECO:0000269" key="4">
    <source>
    </source>
</evidence>
<evidence type="ECO:0000269" key="5">
    <source>
    </source>
</evidence>
<evidence type="ECO:0000269" key="6">
    <source>
    </source>
</evidence>
<evidence type="ECO:0000305" key="7"/>
<evidence type="ECO:0000305" key="8">
    <source>
    </source>
</evidence>
<gene>
    <name type="primary">PA</name>
</gene>
<dbReference type="EMBL" id="X17336">
    <property type="status" value="NOT_ANNOTATED_CDS"/>
    <property type="molecule type" value="Genomic_RNA"/>
</dbReference>
<dbReference type="SMR" id="P0DJW8"/>
<dbReference type="Proteomes" id="UP000000834">
    <property type="component" value="Genome"/>
</dbReference>
<dbReference type="GO" id="GO:0003723">
    <property type="term" value="F:RNA binding"/>
    <property type="evidence" value="ECO:0007669"/>
    <property type="project" value="InterPro"/>
</dbReference>
<dbReference type="GO" id="GO:0039694">
    <property type="term" value="P:viral RNA genome replication"/>
    <property type="evidence" value="ECO:0007669"/>
    <property type="project" value="InterPro"/>
</dbReference>
<dbReference type="GO" id="GO:0075523">
    <property type="term" value="P:viral translational frameshifting"/>
    <property type="evidence" value="ECO:0007669"/>
    <property type="project" value="UniProtKB-KW"/>
</dbReference>
<dbReference type="FunFam" id="3.40.91.90:FF:000001">
    <property type="entry name" value="Polymerase acidic protein"/>
    <property type="match status" value="1"/>
</dbReference>
<dbReference type="Gene3D" id="3.40.91.90">
    <property type="entry name" value="Influenza RNA-dependent RNA polymerase subunit PA, endonuclease domain"/>
    <property type="match status" value="1"/>
</dbReference>
<dbReference type="InterPro" id="IPR001009">
    <property type="entry name" value="PA/PA-X"/>
</dbReference>
<dbReference type="InterPro" id="IPR038372">
    <property type="entry name" value="PA/PA-X_sf"/>
</dbReference>
<dbReference type="Pfam" id="PF00603">
    <property type="entry name" value="Flu_PA"/>
    <property type="match status" value="1"/>
</dbReference>
<accession>P0DJW8</accession>
<protein>
    <recommendedName>
        <fullName>Protein PA-X</fullName>
    </recommendedName>
</protein>
<keyword id="KW-0007">Acetylation</keyword>
<keyword id="KW-1132">Decay of host mRNAs by virus</keyword>
<keyword id="KW-1262">Eukaryotic host gene expression shutoff by virus</keyword>
<keyword id="KW-1035">Host cytoplasm</keyword>
<keyword id="KW-1190">Host gene expression shutoff by virus</keyword>
<keyword id="KW-1192">Host mRNA suppression by virus</keyword>
<keyword id="KW-1048">Host nucleus</keyword>
<keyword id="KW-0945">Host-virus interaction</keyword>
<keyword id="KW-0688">Ribosomal frameshifting</keyword>